<organism>
    <name type="scientific">Acidithiobacillus ferrooxidans (strain ATCC 23270 / DSM 14882 / CIP 104768 / NCIMB 8455)</name>
    <name type="common">Ferrobacillus ferrooxidans (strain ATCC 23270)</name>
    <dbReference type="NCBI Taxonomy" id="243159"/>
    <lineage>
        <taxon>Bacteria</taxon>
        <taxon>Pseudomonadati</taxon>
        <taxon>Pseudomonadota</taxon>
        <taxon>Acidithiobacillia</taxon>
        <taxon>Acidithiobacillales</taxon>
        <taxon>Acidithiobacillaceae</taxon>
        <taxon>Acidithiobacillus</taxon>
    </lineage>
</organism>
<protein>
    <recommendedName>
        <fullName evidence="1">Co-chaperonin GroES</fullName>
    </recommendedName>
    <alternativeName>
        <fullName evidence="1">10 kDa chaperonin</fullName>
    </alternativeName>
    <alternativeName>
        <fullName evidence="1">Chaperonin-10</fullName>
        <shortName evidence="1">Cpn10</shortName>
    </alternativeName>
</protein>
<comment type="function">
    <text evidence="1">Together with the chaperonin GroEL, plays an essential role in assisting protein folding. The GroEL-GroES system forms a nano-cage that allows encapsulation of the non-native substrate proteins and provides a physical environment optimized to promote and accelerate protein folding. GroES binds to the apical surface of the GroEL ring, thereby capping the opening of the GroEL channel.</text>
</comment>
<comment type="subunit">
    <text evidence="1">Heptamer of 7 subunits arranged in a ring. Interacts with the chaperonin GroEL.</text>
</comment>
<comment type="subcellular location">
    <subcellularLocation>
        <location evidence="1">Cytoplasm</location>
    </subcellularLocation>
</comment>
<comment type="similarity">
    <text evidence="1">Belongs to the GroES chaperonin family.</text>
</comment>
<feature type="chain" id="PRO_1000129615" description="Co-chaperonin GroES">
    <location>
        <begin position="1"/>
        <end position="96"/>
    </location>
</feature>
<dbReference type="EMBL" id="CP001219">
    <property type="protein sequence ID" value="ACK77997.1"/>
    <property type="molecule type" value="Genomic_DNA"/>
</dbReference>
<dbReference type="RefSeq" id="WP_009567579.1">
    <property type="nucleotide sequence ID" value="NC_011761.1"/>
</dbReference>
<dbReference type="SMR" id="B7J562"/>
<dbReference type="STRING" id="243159.AFE_0543"/>
<dbReference type="PaxDb" id="243159-AFE_0543"/>
<dbReference type="GeneID" id="65279902"/>
<dbReference type="KEGG" id="afr:AFE_0543"/>
<dbReference type="eggNOG" id="COG0234">
    <property type="taxonomic scope" value="Bacteria"/>
</dbReference>
<dbReference type="HOGENOM" id="CLU_132825_2_0_6"/>
<dbReference type="Proteomes" id="UP000001362">
    <property type="component" value="Chromosome"/>
</dbReference>
<dbReference type="GO" id="GO:0005737">
    <property type="term" value="C:cytoplasm"/>
    <property type="evidence" value="ECO:0007669"/>
    <property type="project" value="UniProtKB-SubCell"/>
</dbReference>
<dbReference type="GO" id="GO:0005524">
    <property type="term" value="F:ATP binding"/>
    <property type="evidence" value="ECO:0007669"/>
    <property type="project" value="InterPro"/>
</dbReference>
<dbReference type="GO" id="GO:0046872">
    <property type="term" value="F:metal ion binding"/>
    <property type="evidence" value="ECO:0007669"/>
    <property type="project" value="TreeGrafter"/>
</dbReference>
<dbReference type="GO" id="GO:0044183">
    <property type="term" value="F:protein folding chaperone"/>
    <property type="evidence" value="ECO:0007669"/>
    <property type="project" value="InterPro"/>
</dbReference>
<dbReference type="GO" id="GO:0051087">
    <property type="term" value="F:protein-folding chaperone binding"/>
    <property type="evidence" value="ECO:0007669"/>
    <property type="project" value="TreeGrafter"/>
</dbReference>
<dbReference type="GO" id="GO:0051082">
    <property type="term" value="F:unfolded protein binding"/>
    <property type="evidence" value="ECO:0007669"/>
    <property type="project" value="TreeGrafter"/>
</dbReference>
<dbReference type="GO" id="GO:0051085">
    <property type="term" value="P:chaperone cofactor-dependent protein refolding"/>
    <property type="evidence" value="ECO:0007669"/>
    <property type="project" value="TreeGrafter"/>
</dbReference>
<dbReference type="CDD" id="cd00320">
    <property type="entry name" value="cpn10"/>
    <property type="match status" value="1"/>
</dbReference>
<dbReference type="FunFam" id="2.30.33.40:FF:000001">
    <property type="entry name" value="10 kDa chaperonin"/>
    <property type="match status" value="1"/>
</dbReference>
<dbReference type="Gene3D" id="2.30.33.40">
    <property type="entry name" value="GroES chaperonin"/>
    <property type="match status" value="1"/>
</dbReference>
<dbReference type="HAMAP" id="MF_00580">
    <property type="entry name" value="CH10"/>
    <property type="match status" value="1"/>
</dbReference>
<dbReference type="InterPro" id="IPR020818">
    <property type="entry name" value="Chaperonin_GroES"/>
</dbReference>
<dbReference type="InterPro" id="IPR037124">
    <property type="entry name" value="Chaperonin_GroES_sf"/>
</dbReference>
<dbReference type="InterPro" id="IPR018369">
    <property type="entry name" value="Chaprnonin_Cpn10_CS"/>
</dbReference>
<dbReference type="InterPro" id="IPR011032">
    <property type="entry name" value="GroES-like_sf"/>
</dbReference>
<dbReference type="NCBIfam" id="NF001527">
    <property type="entry name" value="PRK00364.1-2"/>
    <property type="match status" value="1"/>
</dbReference>
<dbReference type="NCBIfam" id="NF001529">
    <property type="entry name" value="PRK00364.1-5"/>
    <property type="match status" value="1"/>
</dbReference>
<dbReference type="NCBIfam" id="NF001531">
    <property type="entry name" value="PRK00364.2-2"/>
    <property type="match status" value="1"/>
</dbReference>
<dbReference type="NCBIfam" id="NF001533">
    <property type="entry name" value="PRK00364.2-4"/>
    <property type="match status" value="1"/>
</dbReference>
<dbReference type="NCBIfam" id="NF001534">
    <property type="entry name" value="PRK00364.2-5"/>
    <property type="match status" value="1"/>
</dbReference>
<dbReference type="PANTHER" id="PTHR10772">
    <property type="entry name" value="10 KDA HEAT SHOCK PROTEIN"/>
    <property type="match status" value="1"/>
</dbReference>
<dbReference type="PANTHER" id="PTHR10772:SF58">
    <property type="entry name" value="CO-CHAPERONIN GROES"/>
    <property type="match status" value="1"/>
</dbReference>
<dbReference type="Pfam" id="PF00166">
    <property type="entry name" value="Cpn10"/>
    <property type="match status" value="1"/>
</dbReference>
<dbReference type="PRINTS" id="PR00297">
    <property type="entry name" value="CHAPERONIN10"/>
</dbReference>
<dbReference type="SMART" id="SM00883">
    <property type="entry name" value="Cpn10"/>
    <property type="match status" value="1"/>
</dbReference>
<dbReference type="SUPFAM" id="SSF50129">
    <property type="entry name" value="GroES-like"/>
    <property type="match status" value="1"/>
</dbReference>
<dbReference type="PROSITE" id="PS00681">
    <property type="entry name" value="CHAPERONINS_CPN10"/>
    <property type="match status" value="1"/>
</dbReference>
<gene>
    <name evidence="1" type="primary">groES</name>
    <name evidence="1" type="synonym">groS</name>
    <name type="ordered locus">AFE_0543</name>
</gene>
<proteinExistence type="inferred from homology"/>
<reference key="1">
    <citation type="journal article" date="2008" name="BMC Genomics">
        <title>Acidithiobacillus ferrooxidans metabolism: from genome sequence to industrial applications.</title>
        <authorList>
            <person name="Valdes J."/>
            <person name="Pedroso I."/>
            <person name="Quatrini R."/>
            <person name="Dodson R.J."/>
            <person name="Tettelin H."/>
            <person name="Blake R. II"/>
            <person name="Eisen J.A."/>
            <person name="Holmes D.S."/>
        </authorList>
    </citation>
    <scope>NUCLEOTIDE SEQUENCE [LARGE SCALE GENOMIC DNA]</scope>
    <source>
        <strain>ATCC 23270 / DSM 14882 / CIP 104768 / NCIMB 8455</strain>
    </source>
</reference>
<name>CH10_ACIF2</name>
<keyword id="KW-0143">Chaperone</keyword>
<keyword id="KW-0963">Cytoplasm</keyword>
<keyword id="KW-1185">Reference proteome</keyword>
<sequence length="96" mass="10675">MKLRPLHDRVVIRRLEEEQKTAGGIIIPDTAKEKPVRGEIVAAGHGKILEDGKVRALDVKTGDQVLFAKYAGTEIKVEGEELLVMREDDIMAVIEK</sequence>
<evidence type="ECO:0000255" key="1">
    <source>
        <dbReference type="HAMAP-Rule" id="MF_00580"/>
    </source>
</evidence>
<accession>B7J562</accession>